<dbReference type="EMBL" id="L02534">
    <property type="status" value="NOT_ANNOTATED_CDS"/>
    <property type="molecule type" value="Genomic_DNA"/>
</dbReference>
<dbReference type="SMR" id="P0C747"/>
<dbReference type="GO" id="GO:0042025">
    <property type="term" value="C:host cell nucleus"/>
    <property type="evidence" value="ECO:0007669"/>
    <property type="project" value="UniProtKB-SubCell"/>
</dbReference>
<dbReference type="GO" id="GO:0003677">
    <property type="term" value="F:DNA binding"/>
    <property type="evidence" value="ECO:0007669"/>
    <property type="project" value="UniProtKB-KW"/>
</dbReference>
<dbReference type="GO" id="GO:0016032">
    <property type="term" value="P:viral process"/>
    <property type="evidence" value="ECO:0007669"/>
    <property type="project" value="InterPro"/>
</dbReference>
<dbReference type="InterPro" id="IPR026220">
    <property type="entry name" value="HTLV1ZIPPER"/>
</dbReference>
<dbReference type="PRINTS" id="PR02097">
    <property type="entry name" value="HTLV1ZIPPER"/>
</dbReference>
<organism>
    <name type="scientific">Human T-cell leukemia virus 1 (isolate Melanesia mel5 subtype C)</name>
    <name type="common">HTLV-1</name>
    <dbReference type="NCBI Taxonomy" id="402046"/>
    <lineage>
        <taxon>Viruses</taxon>
        <taxon>Riboviria</taxon>
        <taxon>Pararnavirae</taxon>
        <taxon>Artverviricota</taxon>
        <taxon>Revtraviricetes</taxon>
        <taxon>Ortervirales</taxon>
        <taxon>Retroviridae</taxon>
        <taxon>Orthoretrovirinae</taxon>
        <taxon>Deltaretrovirus</taxon>
        <taxon>Primate T-lymphotropic virus 1</taxon>
    </lineage>
</organism>
<organismHost>
    <name type="scientific">Homo sapiens</name>
    <name type="common">Human</name>
    <dbReference type="NCBI Taxonomy" id="9606"/>
</organismHost>
<sequence length="208" mass="25018">MINFVFVGPFRCLPVPCPEDLLVEDLVDGLLSLEDELKDQREEEESVLDGVLSLEEESRLRWGPVGEEAPPRGETHRDRQRRAEEKRKRKREREKEEEKQIAEFLKRKREKEAWRRRRAEEKAADRARRKLEEEERRERKWRQTEQGAKQRSARKEKMTELGVDGYARQLESEAESLEAERGRLLQENDDLMGEVNYWQRRLEAMWSQ</sequence>
<proteinExistence type="inferred from homology"/>
<accession>P0C747</accession>
<feature type="chain" id="PRO_0000379887" description="HTLV-1 basic zipper factor">
    <location>
        <begin position="1"/>
        <end position="208"/>
    </location>
</feature>
<feature type="region of interest" description="Disordered" evidence="2">
    <location>
        <begin position="59"/>
        <end position="93"/>
    </location>
</feature>
<feature type="region of interest" description="Disordered" evidence="2">
    <location>
        <begin position="125"/>
        <end position="160"/>
    </location>
</feature>
<feature type="short sequence motif" description="Nuclear localization signal 1" evidence="1">
    <location>
        <begin position="86"/>
        <end position="91"/>
    </location>
</feature>
<feature type="short sequence motif" description="Nuclear localization signal 2" evidence="1">
    <location>
        <begin position="115"/>
        <end position="119"/>
    </location>
</feature>
<feature type="short sequence motif" description="Nuclear localization signal 3" evidence="1">
    <location>
        <begin position="136"/>
        <end position="140"/>
    </location>
</feature>
<feature type="compositionally biased region" description="Basic and acidic residues" evidence="2">
    <location>
        <begin position="69"/>
        <end position="86"/>
    </location>
</feature>
<feature type="compositionally biased region" description="Basic and acidic residues" evidence="2">
    <location>
        <begin position="125"/>
        <end position="143"/>
    </location>
</feature>
<feature type="splice variant" id="VSP_037727" description="In isoform HBZ-SI." evidence="3">
    <original>MINFVFV</original>
    <variation>MAAS</variation>
    <location>
        <begin position="1"/>
        <end position="7"/>
    </location>
</feature>
<comment type="function">
    <text evidence="1">Contributes to the regulation of viral RNA transcription by interacting with host proteins involved in transcriptional activation such as ATF4, or CREB1, and by inhibiting their activity. Additionally, HBZ suppresses host NF-kappa-B-driven transcription mediated by host RELA as well as transcription of some classical NF-kappa-B target genes, including IL8, IL2RA, IRF4, VCAM1, and VEGFA (By similarity).</text>
</comment>
<comment type="subunit">
    <text evidence="1">Interacts with host ATF4; this interaction inhibits viral RNA transcriptional activation by preventing ATF4 binding to Tax-responsive elements. Interacts with host CREB1; this interaction inhibits host CREB1 transcriptional activity. Interacts with host JUN, JUNB and JUND. Interacts with host EP300 (By similarity).</text>
</comment>
<comment type="subcellular location">
    <subcellularLocation>
        <location evidence="1">Host nucleus</location>
    </subcellularLocation>
</comment>
<comment type="alternative products">
    <event type="alternative splicing"/>
    <isoform>
        <id>P0C747-1</id>
        <name>HBZ</name>
        <sequence type="displayed"/>
    </isoform>
    <isoform>
        <id>P0C747-2</id>
        <name>HBZ-SI</name>
        <sequence type="described" ref="VSP_037727"/>
    </isoform>
</comment>
<comment type="domain">
    <text>Contains three nuclear localization signals NLS-1 and NLS-2, corresponding to two regions rich in basic amino acids, and NLS-3 corresponding to its DNA-binding domain.</text>
</comment>
<comment type="miscellaneous">
    <text>While mRNA expression levels of HBZ-SI were similar to those of HBZ, HBZ-SI seems slightly more expressed at the protein level ex vivo.</text>
</comment>
<comment type="similarity">
    <text evidence="3">Belongs to the HTLV-1 HBZ protein family.</text>
</comment>
<keyword id="KW-0025">Alternative splicing</keyword>
<keyword id="KW-0238">DNA-binding</keyword>
<keyword id="KW-1048">Host nucleus</keyword>
<keyword id="KW-0945">Host-virus interaction</keyword>
<evidence type="ECO:0000250" key="1"/>
<evidence type="ECO:0000256" key="2">
    <source>
        <dbReference type="SAM" id="MobiDB-lite"/>
    </source>
</evidence>
<evidence type="ECO:0000305" key="3"/>
<name>HBZ_HTL1L</name>
<gene>
    <name type="primary">HBZ</name>
</gene>
<protein>
    <recommendedName>
        <fullName>HTLV-1 basic zipper factor</fullName>
        <shortName>HBZ</shortName>
    </recommendedName>
</protein>
<reference key="1">
    <citation type="journal article" date="1993" name="J. Virol.">
        <title>Complete nucleotide sequence of a highly divergent human T-cell leukemia (lymphotropic) virus type I (HTLV-I) variant from melanesia: genetic and phylogenetic relationship to HTLV-I strains from other geographical regions.</title>
        <authorList>
            <person name="Gessain A."/>
            <person name="Boeri E."/>
            <person name="Yanagihara R."/>
            <person name="Gallo R.C."/>
            <person name="Franchini G."/>
        </authorList>
    </citation>
    <scope>NUCLEOTIDE SEQUENCE [GENOMIC DNA]</scope>
</reference>